<reference key="1">
    <citation type="submission" date="2005-08" db="EMBL/GenBank/DDBJ databases">
        <title>Complete sequence of chromosome 1 of Nitrosospira multiformis ATCC 25196.</title>
        <authorList>
            <person name="Copeland A."/>
            <person name="Lucas S."/>
            <person name="Lapidus A."/>
            <person name="Barry K."/>
            <person name="Detter J.C."/>
            <person name="Glavina T."/>
            <person name="Hammon N."/>
            <person name="Israni S."/>
            <person name="Pitluck S."/>
            <person name="Chain P."/>
            <person name="Malfatti S."/>
            <person name="Shin M."/>
            <person name="Vergez L."/>
            <person name="Schmutz J."/>
            <person name="Larimer F."/>
            <person name="Land M."/>
            <person name="Hauser L."/>
            <person name="Kyrpides N."/>
            <person name="Lykidis A."/>
            <person name="Richardson P."/>
        </authorList>
    </citation>
    <scope>NUCLEOTIDE SEQUENCE [LARGE SCALE GENOMIC DNA]</scope>
    <source>
        <strain>ATCC 25196 / NCIMB 11849 / C 71</strain>
    </source>
</reference>
<proteinExistence type="inferred from homology"/>
<comment type="function">
    <text evidence="1">Cell wall formation. Catalyzes the transfer of a GlcNAc subunit on undecaprenyl-pyrophosphoryl-MurNAc-pentapeptide (lipid intermediate I) to form undecaprenyl-pyrophosphoryl-MurNAc-(pentapeptide)GlcNAc (lipid intermediate II).</text>
</comment>
<comment type="catalytic activity">
    <reaction evidence="1">
        <text>di-trans,octa-cis-undecaprenyl diphospho-N-acetyl-alpha-D-muramoyl-L-alanyl-D-glutamyl-meso-2,6-diaminopimeloyl-D-alanyl-D-alanine + UDP-N-acetyl-alpha-D-glucosamine = di-trans,octa-cis-undecaprenyl diphospho-[N-acetyl-alpha-D-glucosaminyl-(1-&gt;4)]-N-acetyl-alpha-D-muramoyl-L-alanyl-D-glutamyl-meso-2,6-diaminopimeloyl-D-alanyl-D-alanine + UDP + H(+)</text>
        <dbReference type="Rhea" id="RHEA:31227"/>
        <dbReference type="ChEBI" id="CHEBI:15378"/>
        <dbReference type="ChEBI" id="CHEBI:57705"/>
        <dbReference type="ChEBI" id="CHEBI:58223"/>
        <dbReference type="ChEBI" id="CHEBI:61387"/>
        <dbReference type="ChEBI" id="CHEBI:61388"/>
        <dbReference type="EC" id="2.4.1.227"/>
    </reaction>
</comment>
<comment type="pathway">
    <text evidence="1">Cell wall biogenesis; peptidoglycan biosynthesis.</text>
</comment>
<comment type="subcellular location">
    <subcellularLocation>
        <location evidence="1">Cell inner membrane</location>
        <topology evidence="1">Peripheral membrane protein</topology>
        <orientation evidence="1">Cytoplasmic side</orientation>
    </subcellularLocation>
</comment>
<comment type="similarity">
    <text evidence="1">Belongs to the glycosyltransferase 28 family. MurG subfamily.</text>
</comment>
<accession>Q2Y638</accession>
<dbReference type="EC" id="2.4.1.227" evidence="1"/>
<dbReference type="EMBL" id="CP000103">
    <property type="protein sequence ID" value="ABB75783.1"/>
    <property type="molecule type" value="Genomic_DNA"/>
</dbReference>
<dbReference type="RefSeq" id="WP_011381782.1">
    <property type="nucleotide sequence ID" value="NC_007614.1"/>
</dbReference>
<dbReference type="SMR" id="Q2Y638"/>
<dbReference type="STRING" id="323848.Nmul_A2494"/>
<dbReference type="CAZy" id="GT28">
    <property type="family name" value="Glycosyltransferase Family 28"/>
</dbReference>
<dbReference type="KEGG" id="nmu:Nmul_A2494"/>
<dbReference type="eggNOG" id="COG0707">
    <property type="taxonomic scope" value="Bacteria"/>
</dbReference>
<dbReference type="HOGENOM" id="CLU_037404_2_0_4"/>
<dbReference type="OrthoDB" id="9808936at2"/>
<dbReference type="UniPathway" id="UPA00219"/>
<dbReference type="Proteomes" id="UP000002718">
    <property type="component" value="Chromosome"/>
</dbReference>
<dbReference type="GO" id="GO:0005886">
    <property type="term" value="C:plasma membrane"/>
    <property type="evidence" value="ECO:0007669"/>
    <property type="project" value="UniProtKB-SubCell"/>
</dbReference>
<dbReference type="GO" id="GO:0051991">
    <property type="term" value="F:UDP-N-acetyl-D-glucosamine:N-acetylmuramoyl-L-alanyl-D-glutamyl-meso-2,6-diaminopimelyl-D-alanyl-D-alanine-diphosphoundecaprenol 4-beta-N-acetylglucosaminlytransferase activity"/>
    <property type="evidence" value="ECO:0007669"/>
    <property type="project" value="RHEA"/>
</dbReference>
<dbReference type="GO" id="GO:0050511">
    <property type="term" value="F:undecaprenyldiphospho-muramoylpentapeptide beta-N-acetylglucosaminyltransferase activity"/>
    <property type="evidence" value="ECO:0007669"/>
    <property type="project" value="UniProtKB-UniRule"/>
</dbReference>
<dbReference type="GO" id="GO:0005975">
    <property type="term" value="P:carbohydrate metabolic process"/>
    <property type="evidence" value="ECO:0007669"/>
    <property type="project" value="InterPro"/>
</dbReference>
<dbReference type="GO" id="GO:0051301">
    <property type="term" value="P:cell division"/>
    <property type="evidence" value="ECO:0007669"/>
    <property type="project" value="UniProtKB-KW"/>
</dbReference>
<dbReference type="GO" id="GO:0071555">
    <property type="term" value="P:cell wall organization"/>
    <property type="evidence" value="ECO:0007669"/>
    <property type="project" value="UniProtKB-KW"/>
</dbReference>
<dbReference type="GO" id="GO:0030259">
    <property type="term" value="P:lipid glycosylation"/>
    <property type="evidence" value="ECO:0007669"/>
    <property type="project" value="UniProtKB-UniRule"/>
</dbReference>
<dbReference type="GO" id="GO:0009252">
    <property type="term" value="P:peptidoglycan biosynthetic process"/>
    <property type="evidence" value="ECO:0007669"/>
    <property type="project" value="UniProtKB-UniRule"/>
</dbReference>
<dbReference type="GO" id="GO:0008360">
    <property type="term" value="P:regulation of cell shape"/>
    <property type="evidence" value="ECO:0007669"/>
    <property type="project" value="UniProtKB-KW"/>
</dbReference>
<dbReference type="CDD" id="cd03785">
    <property type="entry name" value="GT28_MurG"/>
    <property type="match status" value="1"/>
</dbReference>
<dbReference type="Gene3D" id="3.40.50.2000">
    <property type="entry name" value="Glycogen Phosphorylase B"/>
    <property type="match status" value="2"/>
</dbReference>
<dbReference type="HAMAP" id="MF_00033">
    <property type="entry name" value="MurG"/>
    <property type="match status" value="1"/>
</dbReference>
<dbReference type="InterPro" id="IPR006009">
    <property type="entry name" value="GlcNAc_MurG"/>
</dbReference>
<dbReference type="InterPro" id="IPR007235">
    <property type="entry name" value="Glyco_trans_28_C"/>
</dbReference>
<dbReference type="InterPro" id="IPR004276">
    <property type="entry name" value="GlycoTrans_28_N"/>
</dbReference>
<dbReference type="NCBIfam" id="TIGR01133">
    <property type="entry name" value="murG"/>
    <property type="match status" value="1"/>
</dbReference>
<dbReference type="PANTHER" id="PTHR21015:SF22">
    <property type="entry name" value="GLYCOSYLTRANSFERASE"/>
    <property type="match status" value="1"/>
</dbReference>
<dbReference type="PANTHER" id="PTHR21015">
    <property type="entry name" value="UDP-N-ACETYLGLUCOSAMINE--N-ACETYLMURAMYL-(PENTAPEPTIDE) PYROPHOSPHORYL-UNDECAPRENOL N-ACETYLGLUCOSAMINE TRANSFERASE 1"/>
    <property type="match status" value="1"/>
</dbReference>
<dbReference type="Pfam" id="PF04101">
    <property type="entry name" value="Glyco_tran_28_C"/>
    <property type="match status" value="1"/>
</dbReference>
<dbReference type="Pfam" id="PF03033">
    <property type="entry name" value="Glyco_transf_28"/>
    <property type="match status" value="1"/>
</dbReference>
<dbReference type="SUPFAM" id="SSF53756">
    <property type="entry name" value="UDP-Glycosyltransferase/glycogen phosphorylase"/>
    <property type="match status" value="1"/>
</dbReference>
<keyword id="KW-0131">Cell cycle</keyword>
<keyword id="KW-0132">Cell division</keyword>
<keyword id="KW-0997">Cell inner membrane</keyword>
<keyword id="KW-1003">Cell membrane</keyword>
<keyword id="KW-0133">Cell shape</keyword>
<keyword id="KW-0961">Cell wall biogenesis/degradation</keyword>
<keyword id="KW-0328">Glycosyltransferase</keyword>
<keyword id="KW-0472">Membrane</keyword>
<keyword id="KW-0573">Peptidoglycan synthesis</keyword>
<keyword id="KW-1185">Reference proteome</keyword>
<keyword id="KW-0808">Transferase</keyword>
<sequence length="357" mass="38219">MSHTILIMAGGTGGHVFPGLAVAEYLKAAGWRIVWLGTEGGMETTLARQQGHALETIRFSGLRGKNVRTWLLLPARLLLAFWQSARVIRKVRPDVVLGMGGYPAFPGGMMASLLARPLLIHEQNSIPGLANRILSRLADRVLLGFPDAIKSEKKAVFCGNPVRDEITRLAPPAQRYAGRSGSIKLLVVGGSLGAQALNTIVPRALKRIPEGMRPQVTHQAGARHLEALKQNYSEAGVEGELVTFIDNMASRYGESDLVICRAGALTVSELAAAGVASILVPFPYAVDDHQSTNAKFLSGKGAAILLPQSQLTPEGLAELLVGMSRGQLMEMACRARELAQPDATRCVAETCMQMVAV</sequence>
<protein>
    <recommendedName>
        <fullName evidence="1">UDP-N-acetylglucosamine--N-acetylmuramyl-(pentapeptide) pyrophosphoryl-undecaprenol N-acetylglucosamine transferase</fullName>
        <ecNumber evidence="1">2.4.1.227</ecNumber>
    </recommendedName>
    <alternativeName>
        <fullName evidence="1">Undecaprenyl-PP-MurNAc-pentapeptide-UDPGlcNAc GlcNAc transferase</fullName>
    </alternativeName>
</protein>
<feature type="chain" id="PRO_0000315128" description="UDP-N-acetylglucosamine--N-acetylmuramyl-(pentapeptide) pyrophosphoryl-undecaprenol N-acetylglucosamine transferase">
    <location>
        <begin position="1"/>
        <end position="357"/>
    </location>
</feature>
<feature type="binding site" evidence="1">
    <location>
        <begin position="12"/>
        <end position="14"/>
    </location>
    <ligand>
        <name>UDP-N-acetyl-alpha-D-glucosamine</name>
        <dbReference type="ChEBI" id="CHEBI:57705"/>
    </ligand>
</feature>
<feature type="binding site" evidence="1">
    <location>
        <position position="124"/>
    </location>
    <ligand>
        <name>UDP-N-acetyl-alpha-D-glucosamine</name>
        <dbReference type="ChEBI" id="CHEBI:57705"/>
    </ligand>
</feature>
<feature type="binding site" evidence="1">
    <location>
        <position position="163"/>
    </location>
    <ligand>
        <name>UDP-N-acetyl-alpha-D-glucosamine</name>
        <dbReference type="ChEBI" id="CHEBI:57705"/>
    </ligand>
</feature>
<feature type="binding site" evidence="1">
    <location>
        <position position="191"/>
    </location>
    <ligand>
        <name>UDP-N-acetyl-alpha-D-glucosamine</name>
        <dbReference type="ChEBI" id="CHEBI:57705"/>
    </ligand>
</feature>
<feature type="binding site" evidence="1">
    <location>
        <position position="245"/>
    </location>
    <ligand>
        <name>UDP-N-acetyl-alpha-D-glucosamine</name>
        <dbReference type="ChEBI" id="CHEBI:57705"/>
    </ligand>
</feature>
<feature type="binding site" evidence="1">
    <location>
        <begin position="264"/>
        <end position="269"/>
    </location>
    <ligand>
        <name>UDP-N-acetyl-alpha-D-glucosamine</name>
        <dbReference type="ChEBI" id="CHEBI:57705"/>
    </ligand>
</feature>
<feature type="binding site" evidence="1">
    <location>
        <position position="290"/>
    </location>
    <ligand>
        <name>UDP-N-acetyl-alpha-D-glucosamine</name>
        <dbReference type="ChEBI" id="CHEBI:57705"/>
    </ligand>
</feature>
<name>MURG_NITMU</name>
<gene>
    <name evidence="1" type="primary">murG</name>
    <name type="ordered locus">Nmul_A2494</name>
</gene>
<evidence type="ECO:0000255" key="1">
    <source>
        <dbReference type="HAMAP-Rule" id="MF_00033"/>
    </source>
</evidence>
<organism>
    <name type="scientific">Nitrosospira multiformis (strain ATCC 25196 / NCIMB 11849 / C 71)</name>
    <dbReference type="NCBI Taxonomy" id="323848"/>
    <lineage>
        <taxon>Bacteria</taxon>
        <taxon>Pseudomonadati</taxon>
        <taxon>Pseudomonadota</taxon>
        <taxon>Betaproteobacteria</taxon>
        <taxon>Nitrosomonadales</taxon>
        <taxon>Nitrosomonadaceae</taxon>
        <taxon>Nitrosospira</taxon>
    </lineage>
</organism>